<accession>P56222</accession>
<gene>
    <name type="primary">Pou3f2</name>
    <name type="synonym">Brn2</name>
    <name type="synonym">Otf7</name>
</gene>
<evidence type="ECO:0000250" key="1">
    <source>
        <dbReference type="UniProtKB" id="P20265"/>
    </source>
</evidence>
<evidence type="ECO:0000250" key="2">
    <source>
        <dbReference type="UniProtKB" id="P31360"/>
    </source>
</evidence>
<evidence type="ECO:0000255" key="3">
    <source>
        <dbReference type="PROSITE-ProRule" id="PRU00108"/>
    </source>
</evidence>
<evidence type="ECO:0000255" key="4">
    <source>
        <dbReference type="PROSITE-ProRule" id="PRU00530"/>
    </source>
</evidence>
<evidence type="ECO:0000256" key="5">
    <source>
        <dbReference type="SAM" id="MobiDB-lite"/>
    </source>
</evidence>
<evidence type="ECO:0000269" key="6">
    <source>
    </source>
</evidence>
<evidence type="ECO:0000305" key="7"/>
<protein>
    <recommendedName>
        <fullName>POU domain, class 3, transcription factor 2</fullName>
    </recommendedName>
    <alternativeName>
        <fullName>Brain-specific homeobox/POU domain protein 2</fullName>
        <shortName>Brain-2</shortName>
        <shortName>Brn-2</shortName>
    </alternativeName>
    <alternativeName>
        <fullName>Nervous system-specific octamer-binding transcription factor N-Oct-3</fullName>
    </alternativeName>
    <alternativeName>
        <fullName>Octamer-binding protein 7</fullName>
        <shortName>Oct-7</shortName>
    </alternativeName>
    <alternativeName>
        <fullName>Octamer-binding transcription factor 7</fullName>
        <shortName>OTF-7</shortName>
    </alternativeName>
</protein>
<name>PO3F2_RAT</name>
<proteinExistence type="evidence at protein level"/>
<keyword id="KW-0010">Activator</keyword>
<keyword id="KW-0221">Differentiation</keyword>
<keyword id="KW-0238">DNA-binding</keyword>
<keyword id="KW-0371">Homeobox</keyword>
<keyword id="KW-0524">Neurogenesis</keyword>
<keyword id="KW-0539">Nucleus</keyword>
<keyword id="KW-0597">Phosphoprotein</keyword>
<keyword id="KW-1185">Reference proteome</keyword>
<keyword id="KW-0804">Transcription</keyword>
<keyword id="KW-0805">Transcription regulation</keyword>
<reference key="1">
    <citation type="journal article" date="1993" name="Genes Dev.">
        <title>Spacing and orientation of bipartite DNA-binding motifs as potential functional determinants for POU domain factors.</title>
        <authorList>
            <person name="Li P."/>
            <person name="He X."/>
            <person name="Gerrero M.R."/>
            <person name="Mok M."/>
            <person name="Aggarwal A."/>
            <person name="Rosenfeld M.G."/>
        </authorList>
    </citation>
    <scope>NUCLEOTIDE SEQUENCE [MRNA]</scope>
    <scope>FUNCTION</scope>
    <source>
        <tissue>Brain</tissue>
    </source>
</reference>
<reference key="2">
    <citation type="journal article" date="2012" name="Nat. Commun.">
        <title>Quantitative maps of protein phosphorylation sites across 14 different rat organs and tissues.</title>
        <authorList>
            <person name="Lundby A."/>
            <person name="Secher A."/>
            <person name="Lage K."/>
            <person name="Nordsborg N.B."/>
            <person name="Dmytriyev A."/>
            <person name="Lundby C."/>
            <person name="Olsen J.V."/>
        </authorList>
    </citation>
    <scope>IDENTIFICATION BY MASS SPECTROMETRY [LARGE SCALE ANALYSIS]</scope>
</reference>
<comment type="function">
    <text evidence="2 6">Transcription factor that plays a key role in neuronal differentiation (By similarity). Binds preferentially to the recognition sequence which consists of two distinct half-sites, ('GCAT') and ('TAAT'), separated by a non-conserved spacer region of 0, 2, or 3 nucleotides (PubMed:8276233). Acts as a transcriptional activator when binding cooperatively with SOX4, SOX11, or SOX12 to gene promoters (By similarity). The combination of three transcription factors, ASCL1, POU3F2/BRN2 and MYT1L, is sufficient to reprogram fibroblasts and other somatic cells into induced neuronal (iN) cells in vitro (By similarity). Acts downstream of ASCL1, accessing chromatin that has been opened by ASCL1, and promotes transcription of neuronal genes (By similarity).</text>
</comment>
<comment type="subunit">
    <text evidence="1 2">Interacts with PQBP1. Interaction with ISL1.</text>
</comment>
<comment type="subcellular location">
    <subcellularLocation>
        <location>Nucleus</location>
    </subcellularLocation>
</comment>
<comment type="tissue specificity">
    <text>Expressed specifically at high levels in the brain.</text>
</comment>
<comment type="similarity">
    <text evidence="7">Belongs to the POU transcription factor family. Class-3 subfamily.</text>
</comment>
<feature type="chain" id="PRO_0000100724" description="POU domain, class 3, transcription factor 2">
    <location>
        <begin position="1"/>
        <end position="445"/>
    </location>
</feature>
<feature type="domain" description="POU-specific" evidence="4">
    <location>
        <begin position="264"/>
        <end position="338"/>
    </location>
</feature>
<feature type="DNA-binding region" description="Homeobox" evidence="3">
    <location>
        <begin position="356"/>
        <end position="415"/>
    </location>
</feature>
<feature type="region of interest" description="Disordered" evidence="5">
    <location>
        <begin position="63"/>
        <end position="173"/>
    </location>
</feature>
<feature type="region of interest" description="Disordered" evidence="5">
    <location>
        <begin position="203"/>
        <end position="269"/>
    </location>
</feature>
<feature type="region of interest" description="Disordered" evidence="5">
    <location>
        <begin position="336"/>
        <end position="361"/>
    </location>
</feature>
<feature type="region of interest" description="Disordered" evidence="5">
    <location>
        <begin position="411"/>
        <end position="445"/>
    </location>
</feature>
<feature type="compositionally biased region" description="Gly residues" evidence="5">
    <location>
        <begin position="68"/>
        <end position="90"/>
    </location>
</feature>
<feature type="compositionally biased region" description="Low complexity" evidence="5">
    <location>
        <begin position="125"/>
        <end position="151"/>
    </location>
</feature>
<feature type="compositionally biased region" description="Basic and acidic residues" evidence="5">
    <location>
        <begin position="217"/>
        <end position="226"/>
    </location>
</feature>
<feature type="compositionally biased region" description="Basic residues" evidence="5">
    <location>
        <begin position="227"/>
        <end position="237"/>
    </location>
</feature>
<feature type="compositionally biased region" description="Pro residues" evidence="5">
    <location>
        <begin position="239"/>
        <end position="253"/>
    </location>
</feature>
<feature type="modified residue" description="Phosphoserine" evidence="1">
    <location>
        <position position="343"/>
    </location>
</feature>
<organism>
    <name type="scientific">Rattus norvegicus</name>
    <name type="common">Rat</name>
    <dbReference type="NCBI Taxonomy" id="10116"/>
    <lineage>
        <taxon>Eukaryota</taxon>
        <taxon>Metazoa</taxon>
        <taxon>Chordata</taxon>
        <taxon>Craniata</taxon>
        <taxon>Vertebrata</taxon>
        <taxon>Euteleostomi</taxon>
        <taxon>Mammalia</taxon>
        <taxon>Eutheria</taxon>
        <taxon>Euarchontoglires</taxon>
        <taxon>Glires</taxon>
        <taxon>Rodentia</taxon>
        <taxon>Myomorpha</taxon>
        <taxon>Muroidea</taxon>
        <taxon>Muridae</taxon>
        <taxon>Murinae</taxon>
        <taxon>Rattus</taxon>
    </lineage>
</organism>
<dbReference type="EMBL" id="L27663">
    <property type="status" value="NOT_ANNOTATED_CDS"/>
    <property type="molecule type" value="mRNA"/>
</dbReference>
<dbReference type="PIR" id="A49447">
    <property type="entry name" value="A49447"/>
</dbReference>
<dbReference type="SMR" id="P56222"/>
<dbReference type="FunCoup" id="P56222">
    <property type="interactions" value="516"/>
</dbReference>
<dbReference type="STRING" id="10116.ENSRNOP00000009043"/>
<dbReference type="PhosphoSitePlus" id="P56222"/>
<dbReference type="PaxDb" id="10116-ENSRNOP00000009043"/>
<dbReference type="UCSC" id="RGD:61946">
    <property type="organism name" value="rat"/>
</dbReference>
<dbReference type="AGR" id="RGD:61946"/>
<dbReference type="RGD" id="61946">
    <property type="gene designation" value="Pou3f2"/>
</dbReference>
<dbReference type="eggNOG" id="KOG3802">
    <property type="taxonomic scope" value="Eukaryota"/>
</dbReference>
<dbReference type="InParanoid" id="P56222"/>
<dbReference type="PhylomeDB" id="P56222"/>
<dbReference type="PRO" id="PR:P56222"/>
<dbReference type="Proteomes" id="UP000002494">
    <property type="component" value="Unplaced"/>
</dbReference>
<dbReference type="GO" id="GO:0005634">
    <property type="term" value="C:nucleus"/>
    <property type="evidence" value="ECO:0000266"/>
    <property type="project" value="RGD"/>
</dbReference>
<dbReference type="GO" id="GO:0005667">
    <property type="term" value="C:transcription regulator complex"/>
    <property type="evidence" value="ECO:0000266"/>
    <property type="project" value="RGD"/>
</dbReference>
<dbReference type="GO" id="GO:0003677">
    <property type="term" value="F:DNA binding"/>
    <property type="evidence" value="ECO:0000314"/>
    <property type="project" value="RGD"/>
</dbReference>
<dbReference type="GO" id="GO:0001228">
    <property type="term" value="F:DNA-binding transcription activator activity, RNA polymerase II-specific"/>
    <property type="evidence" value="ECO:0000314"/>
    <property type="project" value="GO_Central"/>
</dbReference>
<dbReference type="GO" id="GO:0003700">
    <property type="term" value="F:DNA-binding transcription factor activity"/>
    <property type="evidence" value="ECO:0000314"/>
    <property type="project" value="RGD"/>
</dbReference>
<dbReference type="GO" id="GO:0000981">
    <property type="term" value="F:DNA-binding transcription factor activity, RNA polymerase II-specific"/>
    <property type="evidence" value="ECO:0000318"/>
    <property type="project" value="GO_Central"/>
</dbReference>
<dbReference type="GO" id="GO:0071837">
    <property type="term" value="F:HMG box domain binding"/>
    <property type="evidence" value="ECO:0000314"/>
    <property type="project" value="UniProtKB"/>
</dbReference>
<dbReference type="GO" id="GO:0042802">
    <property type="term" value="F:identical protein binding"/>
    <property type="evidence" value="ECO:0000266"/>
    <property type="project" value="RGD"/>
</dbReference>
<dbReference type="GO" id="GO:0000978">
    <property type="term" value="F:RNA polymerase II cis-regulatory region sequence-specific DNA binding"/>
    <property type="evidence" value="ECO:0000266"/>
    <property type="project" value="RGD"/>
</dbReference>
<dbReference type="GO" id="GO:0043565">
    <property type="term" value="F:sequence-specific DNA binding"/>
    <property type="evidence" value="ECO:0000314"/>
    <property type="project" value="RGD"/>
</dbReference>
<dbReference type="GO" id="GO:1990837">
    <property type="term" value="F:sequence-specific double-stranded DNA binding"/>
    <property type="evidence" value="ECO:0000266"/>
    <property type="project" value="RGD"/>
</dbReference>
<dbReference type="GO" id="GO:0021799">
    <property type="term" value="P:cerebral cortex radially oriented cell migration"/>
    <property type="evidence" value="ECO:0000266"/>
    <property type="project" value="RGD"/>
</dbReference>
<dbReference type="GO" id="GO:0008544">
    <property type="term" value="P:epidermis development"/>
    <property type="evidence" value="ECO:0000266"/>
    <property type="project" value="RGD"/>
</dbReference>
<dbReference type="GO" id="GO:0021897">
    <property type="term" value="P:forebrain astrocyte development"/>
    <property type="evidence" value="ECO:0000266"/>
    <property type="project" value="RGD"/>
</dbReference>
<dbReference type="GO" id="GO:0021869">
    <property type="term" value="P:forebrain ventricular zone progenitor cell division"/>
    <property type="evidence" value="ECO:0000266"/>
    <property type="project" value="RGD"/>
</dbReference>
<dbReference type="GO" id="GO:0021979">
    <property type="term" value="P:hypothalamus cell differentiation"/>
    <property type="evidence" value="ECO:0000266"/>
    <property type="project" value="RGD"/>
</dbReference>
<dbReference type="GO" id="GO:0022011">
    <property type="term" value="P:myelination in peripheral nervous system"/>
    <property type="evidence" value="ECO:0000266"/>
    <property type="project" value="RGD"/>
</dbReference>
<dbReference type="GO" id="GO:0010629">
    <property type="term" value="P:negative regulation of gene expression"/>
    <property type="evidence" value="ECO:0000266"/>
    <property type="project" value="RGD"/>
</dbReference>
<dbReference type="GO" id="GO:0007399">
    <property type="term" value="P:nervous system development"/>
    <property type="evidence" value="ECO:0000250"/>
    <property type="project" value="UniProtKB"/>
</dbReference>
<dbReference type="GO" id="GO:0061101">
    <property type="term" value="P:neuroendocrine cell differentiation"/>
    <property type="evidence" value="ECO:0000266"/>
    <property type="project" value="RGD"/>
</dbReference>
<dbReference type="GO" id="GO:0021985">
    <property type="term" value="P:neurohypophysis development"/>
    <property type="evidence" value="ECO:0000266"/>
    <property type="project" value="RGD"/>
</dbReference>
<dbReference type="GO" id="GO:0048666">
    <property type="term" value="P:neuron development"/>
    <property type="evidence" value="ECO:0000250"/>
    <property type="project" value="UniProtKB"/>
</dbReference>
<dbReference type="GO" id="GO:0030182">
    <property type="term" value="P:neuron differentiation"/>
    <property type="evidence" value="ECO:0000250"/>
    <property type="project" value="UniProtKB"/>
</dbReference>
<dbReference type="GO" id="GO:0048663">
    <property type="term" value="P:neuron fate commitment"/>
    <property type="evidence" value="ECO:0000250"/>
    <property type="project" value="UniProtKB"/>
</dbReference>
<dbReference type="GO" id="GO:0048665">
    <property type="term" value="P:neuron fate specification"/>
    <property type="evidence" value="ECO:0000250"/>
    <property type="project" value="UniProtKB"/>
</dbReference>
<dbReference type="GO" id="GO:0008284">
    <property type="term" value="P:positive regulation of cell population proliferation"/>
    <property type="evidence" value="ECO:0000266"/>
    <property type="project" value="RGD"/>
</dbReference>
<dbReference type="GO" id="GO:0040018">
    <property type="term" value="P:positive regulation of multicellular organism growth"/>
    <property type="evidence" value="ECO:0000266"/>
    <property type="project" value="RGD"/>
</dbReference>
<dbReference type="GO" id="GO:0045944">
    <property type="term" value="P:positive regulation of transcription by RNA polymerase II"/>
    <property type="evidence" value="ECO:0000250"/>
    <property type="project" value="UniProtKB"/>
</dbReference>
<dbReference type="GO" id="GO:0050770">
    <property type="term" value="P:regulation of axonogenesis"/>
    <property type="evidence" value="ECO:0000266"/>
    <property type="project" value="RGD"/>
</dbReference>
<dbReference type="GO" id="GO:0045595">
    <property type="term" value="P:regulation of cell differentiation"/>
    <property type="evidence" value="ECO:0000266"/>
    <property type="project" value="RGD"/>
</dbReference>
<dbReference type="GO" id="GO:0006355">
    <property type="term" value="P:regulation of DNA-templated transcription"/>
    <property type="evidence" value="ECO:0000314"/>
    <property type="project" value="RGD"/>
</dbReference>
<dbReference type="GO" id="GO:0006357">
    <property type="term" value="P:regulation of transcription by RNA polymerase II"/>
    <property type="evidence" value="ECO:0000266"/>
    <property type="project" value="RGD"/>
</dbReference>
<dbReference type="GO" id="GO:0014044">
    <property type="term" value="P:Schwann cell development"/>
    <property type="evidence" value="ECO:0000266"/>
    <property type="project" value="RGD"/>
</dbReference>
<dbReference type="CDD" id="cd00086">
    <property type="entry name" value="homeodomain"/>
    <property type="match status" value="1"/>
</dbReference>
<dbReference type="FunFam" id="1.10.10.60:FF:000005">
    <property type="entry name" value="POU domain protein"/>
    <property type="match status" value="1"/>
</dbReference>
<dbReference type="FunFam" id="1.10.260.40:FF:000001">
    <property type="entry name" value="POU domain protein"/>
    <property type="match status" value="1"/>
</dbReference>
<dbReference type="Gene3D" id="1.10.10.60">
    <property type="entry name" value="Homeodomain-like"/>
    <property type="match status" value="1"/>
</dbReference>
<dbReference type="Gene3D" id="1.10.260.40">
    <property type="entry name" value="lambda repressor-like DNA-binding domains"/>
    <property type="match status" value="1"/>
</dbReference>
<dbReference type="InterPro" id="IPR001356">
    <property type="entry name" value="HD"/>
</dbReference>
<dbReference type="InterPro" id="IPR017970">
    <property type="entry name" value="Homeobox_CS"/>
</dbReference>
<dbReference type="InterPro" id="IPR009057">
    <property type="entry name" value="Homeodomain-like_sf"/>
</dbReference>
<dbReference type="InterPro" id="IPR010982">
    <property type="entry name" value="Lambda_DNA-bd_dom_sf"/>
</dbReference>
<dbReference type="InterPro" id="IPR013847">
    <property type="entry name" value="POU"/>
</dbReference>
<dbReference type="InterPro" id="IPR000327">
    <property type="entry name" value="POU_dom"/>
</dbReference>
<dbReference type="InterPro" id="IPR050255">
    <property type="entry name" value="POU_domain_TF"/>
</dbReference>
<dbReference type="InterPro" id="IPR016362">
    <property type="entry name" value="TF_POU_3"/>
</dbReference>
<dbReference type="PANTHER" id="PTHR11636">
    <property type="entry name" value="POU DOMAIN"/>
    <property type="match status" value="1"/>
</dbReference>
<dbReference type="PANTHER" id="PTHR11636:SF115">
    <property type="entry name" value="POU DOMAIN, CLASS 3, TRANSCRIPTION FACTOR 2"/>
    <property type="match status" value="1"/>
</dbReference>
<dbReference type="Pfam" id="PF00046">
    <property type="entry name" value="Homeodomain"/>
    <property type="match status" value="1"/>
</dbReference>
<dbReference type="Pfam" id="PF00157">
    <property type="entry name" value="Pou"/>
    <property type="match status" value="1"/>
</dbReference>
<dbReference type="PIRSF" id="PIRSF002629">
    <property type="entry name" value="Transcription_factor_POU"/>
    <property type="match status" value="1"/>
</dbReference>
<dbReference type="PRINTS" id="PR00028">
    <property type="entry name" value="POUDOMAIN"/>
</dbReference>
<dbReference type="SMART" id="SM00389">
    <property type="entry name" value="HOX"/>
    <property type="match status" value="1"/>
</dbReference>
<dbReference type="SMART" id="SM00352">
    <property type="entry name" value="POU"/>
    <property type="match status" value="1"/>
</dbReference>
<dbReference type="SUPFAM" id="SSF46689">
    <property type="entry name" value="Homeodomain-like"/>
    <property type="match status" value="1"/>
</dbReference>
<dbReference type="SUPFAM" id="SSF47413">
    <property type="entry name" value="lambda repressor-like DNA-binding domains"/>
    <property type="match status" value="1"/>
</dbReference>
<dbReference type="PROSITE" id="PS00027">
    <property type="entry name" value="HOMEOBOX_1"/>
    <property type="match status" value="1"/>
</dbReference>
<dbReference type="PROSITE" id="PS50071">
    <property type="entry name" value="HOMEOBOX_2"/>
    <property type="match status" value="1"/>
</dbReference>
<dbReference type="PROSITE" id="PS00035">
    <property type="entry name" value="POU_1"/>
    <property type="match status" value="1"/>
</dbReference>
<dbReference type="PROSITE" id="PS00465">
    <property type="entry name" value="POU_2"/>
    <property type="match status" value="1"/>
</dbReference>
<dbReference type="PROSITE" id="PS51179">
    <property type="entry name" value="POU_3"/>
    <property type="match status" value="1"/>
</dbReference>
<sequence length="445" mass="47172">MATAASNHYSLLTSSASIVHAEPPGGMQQGAGGYREAQSLQVQGDYGALQSNGHPLSHAHWITALSHGGSGGGGGGGGGGGGGGGGGGDGSPWSTSPLGQPDIKPSVVVQQGGRGDELHGPGALQQQHQQQQQQQQQQQQQQQQQQQQQQQRPPHLVHHAANNHPGPGAWRSAAAAAHLPPSMGASNGGLLYSQPSFTVNGMLGAGGQPAGLHHHGLRDAHDEPHHADHHPHPHSHPHQQPPPPPPPQGPPGHPGAHHDPHSDEDTPTSDDLEQFAKQFKQRRIKLGFTQADVGLALGTLYGNVFSQTTICRFEALQLSFKNMCKLKPLLNKWLEEADSSSGSPTSIDKIASQGRKRKKRTSIEVSVKGALESHFLKCPKPSAQEITSLADSLQLEKEVVRVWFCNRRQKEKRMTPPGGTLPGAEDVYGGSRDTPPHHGVQTPVQ</sequence>